<protein>
    <recommendedName>
        <fullName evidence="1">Anhydro-N-acetylmuramic acid kinase</fullName>
        <ecNumber evidence="1">2.7.1.170</ecNumber>
    </recommendedName>
    <alternativeName>
        <fullName evidence="1">AnhMurNAc kinase</fullName>
    </alternativeName>
</protein>
<comment type="function">
    <text evidence="1">Catalyzes the specific phosphorylation of 1,6-anhydro-N-acetylmuramic acid (anhMurNAc) with the simultaneous cleavage of the 1,6-anhydro ring, generating MurNAc-6-P. Is required for the utilization of anhMurNAc either imported from the medium or derived from its own cell wall murein, and thus plays a role in cell wall recycling.</text>
</comment>
<comment type="catalytic activity">
    <reaction evidence="1">
        <text>1,6-anhydro-N-acetyl-beta-muramate + ATP + H2O = N-acetyl-D-muramate 6-phosphate + ADP + H(+)</text>
        <dbReference type="Rhea" id="RHEA:24952"/>
        <dbReference type="ChEBI" id="CHEBI:15377"/>
        <dbReference type="ChEBI" id="CHEBI:15378"/>
        <dbReference type="ChEBI" id="CHEBI:30616"/>
        <dbReference type="ChEBI" id="CHEBI:58690"/>
        <dbReference type="ChEBI" id="CHEBI:58722"/>
        <dbReference type="ChEBI" id="CHEBI:456216"/>
        <dbReference type="EC" id="2.7.1.170"/>
    </reaction>
</comment>
<comment type="pathway">
    <text evidence="1">Amino-sugar metabolism; 1,6-anhydro-N-acetylmuramate degradation.</text>
</comment>
<comment type="pathway">
    <text evidence="1">Cell wall biogenesis; peptidoglycan recycling.</text>
</comment>
<comment type="similarity">
    <text evidence="1">Belongs to the anhydro-N-acetylmuramic acid kinase family.</text>
</comment>
<evidence type="ECO:0000255" key="1">
    <source>
        <dbReference type="HAMAP-Rule" id="MF_01270"/>
    </source>
</evidence>
<organism>
    <name type="scientific">Bacillus cereus (strain Q1)</name>
    <dbReference type="NCBI Taxonomy" id="361100"/>
    <lineage>
        <taxon>Bacteria</taxon>
        <taxon>Bacillati</taxon>
        <taxon>Bacillota</taxon>
        <taxon>Bacilli</taxon>
        <taxon>Bacillales</taxon>
        <taxon>Bacillaceae</taxon>
        <taxon>Bacillus</taxon>
        <taxon>Bacillus cereus group</taxon>
    </lineage>
</organism>
<keyword id="KW-0067">ATP-binding</keyword>
<keyword id="KW-0119">Carbohydrate metabolism</keyword>
<keyword id="KW-0418">Kinase</keyword>
<keyword id="KW-0547">Nucleotide-binding</keyword>
<keyword id="KW-0808">Transferase</keyword>
<reference key="1">
    <citation type="journal article" date="2009" name="J. Bacteriol.">
        <title>Complete genome sequence of the extremophilic Bacillus cereus strain Q1 with industrial applications.</title>
        <authorList>
            <person name="Xiong Z."/>
            <person name="Jiang Y."/>
            <person name="Qi D."/>
            <person name="Lu H."/>
            <person name="Yang F."/>
            <person name="Yang J."/>
            <person name="Chen L."/>
            <person name="Sun L."/>
            <person name="Xu X."/>
            <person name="Xue Y."/>
            <person name="Zhu Y."/>
            <person name="Jin Q."/>
        </authorList>
    </citation>
    <scope>NUCLEOTIDE SEQUENCE [LARGE SCALE GENOMIC DNA]</scope>
    <source>
        <strain>Q1</strain>
    </source>
</reference>
<sequence length="382" mass="42053">MYIAGVMSGTSLDGIDVALVRIEGSGVDSKVKLIHFTTVPFRNDIKSEIQQALSIENSNVQLICSLNFKLGLCFANAVKEVCKEANFSLEQLDLIGSHGQTIYHQPKPEGNMIASTLQIGEPAVIAYDTNTTVISNFRTMDMAAGGQGAPLVPYSEVILYRDPSKNRLLQNIGGIGNVTVIPSQKSDQNVIAFDTGPGNMIIDEVCQRLFQLPYDQNGEIAEQGEVVDEILTYCMNHPFLKMNPPKSTGREQFGEEFVSQLLKRYEKYSKENILTTVTMFTASSIVHHYKGFILPYYEIDEVILGGGGSYNDTLVEMIRYGLKDEKCTIFIQEDIGYSSEAKEAIAFAILANETYHRNPSNVPSATGAKKSVVLGNVTYPSI</sequence>
<accession>B9J0X9</accession>
<dbReference type="EC" id="2.7.1.170" evidence="1"/>
<dbReference type="EMBL" id="CP000227">
    <property type="protein sequence ID" value="ACM12811.1"/>
    <property type="molecule type" value="Genomic_DNA"/>
</dbReference>
<dbReference type="SMR" id="B9J0X9"/>
<dbReference type="KEGG" id="bcq:BCQ_2383"/>
<dbReference type="HOGENOM" id="CLU_038782_1_0_9"/>
<dbReference type="UniPathway" id="UPA00343"/>
<dbReference type="UniPathway" id="UPA00544"/>
<dbReference type="Proteomes" id="UP000000441">
    <property type="component" value="Chromosome"/>
</dbReference>
<dbReference type="GO" id="GO:0005524">
    <property type="term" value="F:ATP binding"/>
    <property type="evidence" value="ECO:0007669"/>
    <property type="project" value="UniProtKB-UniRule"/>
</dbReference>
<dbReference type="GO" id="GO:0016301">
    <property type="term" value="F:kinase activity"/>
    <property type="evidence" value="ECO:0007669"/>
    <property type="project" value="UniProtKB-KW"/>
</dbReference>
<dbReference type="GO" id="GO:0016773">
    <property type="term" value="F:phosphotransferase activity, alcohol group as acceptor"/>
    <property type="evidence" value="ECO:0007669"/>
    <property type="project" value="UniProtKB-UniRule"/>
</dbReference>
<dbReference type="GO" id="GO:0097175">
    <property type="term" value="P:1,6-anhydro-N-acetyl-beta-muramic acid catabolic process"/>
    <property type="evidence" value="ECO:0007669"/>
    <property type="project" value="UniProtKB-UniRule"/>
</dbReference>
<dbReference type="GO" id="GO:0006040">
    <property type="term" value="P:amino sugar metabolic process"/>
    <property type="evidence" value="ECO:0007669"/>
    <property type="project" value="InterPro"/>
</dbReference>
<dbReference type="GO" id="GO:0009254">
    <property type="term" value="P:peptidoglycan turnover"/>
    <property type="evidence" value="ECO:0007669"/>
    <property type="project" value="UniProtKB-UniRule"/>
</dbReference>
<dbReference type="CDD" id="cd24050">
    <property type="entry name" value="ASKHA_NBD_ANMK"/>
    <property type="match status" value="1"/>
</dbReference>
<dbReference type="Gene3D" id="3.30.420.40">
    <property type="match status" value="2"/>
</dbReference>
<dbReference type="HAMAP" id="MF_01270">
    <property type="entry name" value="AnhMurNAc_kinase"/>
    <property type="match status" value="1"/>
</dbReference>
<dbReference type="InterPro" id="IPR005338">
    <property type="entry name" value="Anhydro_N_Ac-Mur_kinase"/>
</dbReference>
<dbReference type="InterPro" id="IPR043129">
    <property type="entry name" value="ATPase_NBD"/>
</dbReference>
<dbReference type="NCBIfam" id="NF007142">
    <property type="entry name" value="PRK09585.2-1"/>
    <property type="match status" value="1"/>
</dbReference>
<dbReference type="NCBIfam" id="NF007148">
    <property type="entry name" value="PRK09585.3-2"/>
    <property type="match status" value="1"/>
</dbReference>
<dbReference type="PANTHER" id="PTHR30605">
    <property type="entry name" value="ANHYDRO-N-ACETYLMURAMIC ACID KINASE"/>
    <property type="match status" value="1"/>
</dbReference>
<dbReference type="PANTHER" id="PTHR30605:SF0">
    <property type="entry name" value="ANHYDRO-N-ACETYLMURAMIC ACID KINASE"/>
    <property type="match status" value="1"/>
</dbReference>
<dbReference type="Pfam" id="PF03702">
    <property type="entry name" value="AnmK"/>
    <property type="match status" value="1"/>
</dbReference>
<dbReference type="SUPFAM" id="SSF53067">
    <property type="entry name" value="Actin-like ATPase domain"/>
    <property type="match status" value="1"/>
</dbReference>
<proteinExistence type="inferred from homology"/>
<feature type="chain" id="PRO_1000214159" description="Anhydro-N-acetylmuramic acid kinase">
    <location>
        <begin position="1"/>
        <end position="382"/>
    </location>
</feature>
<feature type="binding site" evidence="1">
    <location>
        <begin position="9"/>
        <end position="16"/>
    </location>
    <ligand>
        <name>ATP</name>
        <dbReference type="ChEBI" id="CHEBI:30616"/>
    </ligand>
</feature>
<gene>
    <name evidence="1" type="primary">anmK</name>
    <name type="ordered locus">BCQ_2383</name>
</gene>
<name>ANMK_BACCQ</name>